<organism>
    <name type="scientific">Mycobacterium tuberculosis (strain CDC 1551 / Oshkosh)</name>
    <dbReference type="NCBI Taxonomy" id="83331"/>
    <lineage>
        <taxon>Bacteria</taxon>
        <taxon>Bacillati</taxon>
        <taxon>Actinomycetota</taxon>
        <taxon>Actinomycetes</taxon>
        <taxon>Mycobacteriales</taxon>
        <taxon>Mycobacteriaceae</taxon>
        <taxon>Mycobacterium</taxon>
        <taxon>Mycobacterium tuberculosis complex</taxon>
    </lineage>
</organism>
<dbReference type="EC" id="3.5.1.18"/>
<dbReference type="EMBL" id="AE000516">
    <property type="protein sequence ID" value="AAK45497.1"/>
    <property type="molecule type" value="Genomic_DNA"/>
</dbReference>
<dbReference type="PIR" id="H70608">
    <property type="entry name" value="H70608"/>
</dbReference>
<dbReference type="RefSeq" id="WP_003406235.1">
    <property type="nucleotide sequence ID" value="NZ_KK341227.1"/>
</dbReference>
<dbReference type="SMR" id="P9WHS8"/>
<dbReference type="KEGG" id="mtc:MT1240"/>
<dbReference type="PATRIC" id="fig|83331.31.peg.1339"/>
<dbReference type="HOGENOM" id="CLU_021802_1_0_11"/>
<dbReference type="UniPathway" id="UPA00034">
    <property type="reaction ID" value="UER00021"/>
</dbReference>
<dbReference type="Proteomes" id="UP000001020">
    <property type="component" value="Chromosome"/>
</dbReference>
<dbReference type="GO" id="GO:0008777">
    <property type="term" value="F:acetylornithine deacetylase activity"/>
    <property type="evidence" value="ECO:0007669"/>
    <property type="project" value="TreeGrafter"/>
</dbReference>
<dbReference type="GO" id="GO:0046872">
    <property type="term" value="F:metal ion binding"/>
    <property type="evidence" value="ECO:0007669"/>
    <property type="project" value="UniProtKB-KW"/>
</dbReference>
<dbReference type="GO" id="GO:0009014">
    <property type="term" value="F:succinyl-diaminopimelate desuccinylase activity"/>
    <property type="evidence" value="ECO:0007669"/>
    <property type="project" value="UniProtKB-EC"/>
</dbReference>
<dbReference type="GO" id="GO:0019877">
    <property type="term" value="P:diaminopimelate biosynthetic process"/>
    <property type="evidence" value="ECO:0007669"/>
    <property type="project" value="UniProtKB-KW"/>
</dbReference>
<dbReference type="GO" id="GO:0006526">
    <property type="term" value="P:L-arginine biosynthetic process"/>
    <property type="evidence" value="ECO:0007669"/>
    <property type="project" value="TreeGrafter"/>
</dbReference>
<dbReference type="GO" id="GO:0009089">
    <property type="term" value="P:lysine biosynthetic process via diaminopimelate"/>
    <property type="evidence" value="ECO:0007669"/>
    <property type="project" value="UniProtKB-UniPathway"/>
</dbReference>
<dbReference type="CDD" id="cd05647">
    <property type="entry name" value="M20_DapE_actinobac"/>
    <property type="match status" value="1"/>
</dbReference>
<dbReference type="FunFam" id="3.30.70.360:FF:000011">
    <property type="entry name" value="Succinyl-diaminopimelate desuccinylase"/>
    <property type="match status" value="1"/>
</dbReference>
<dbReference type="Gene3D" id="3.30.70.360">
    <property type="match status" value="1"/>
</dbReference>
<dbReference type="Gene3D" id="3.40.630.10">
    <property type="entry name" value="Zn peptidases"/>
    <property type="match status" value="1"/>
</dbReference>
<dbReference type="InterPro" id="IPR001261">
    <property type="entry name" value="ArgE/DapE_CS"/>
</dbReference>
<dbReference type="InterPro" id="IPR036264">
    <property type="entry name" value="Bact_exopeptidase_dim_dom"/>
</dbReference>
<dbReference type="InterPro" id="IPR002933">
    <property type="entry name" value="Peptidase_M20"/>
</dbReference>
<dbReference type="InterPro" id="IPR011650">
    <property type="entry name" value="Peptidase_M20_dimer"/>
</dbReference>
<dbReference type="InterPro" id="IPR050072">
    <property type="entry name" value="Peptidase_M20A"/>
</dbReference>
<dbReference type="InterPro" id="IPR010174">
    <property type="entry name" value="Succinyl-DAP_deSuclase_DapE"/>
</dbReference>
<dbReference type="NCBIfam" id="TIGR01900">
    <property type="entry name" value="dapE-gram_pos"/>
    <property type="match status" value="1"/>
</dbReference>
<dbReference type="PANTHER" id="PTHR43808">
    <property type="entry name" value="ACETYLORNITHINE DEACETYLASE"/>
    <property type="match status" value="1"/>
</dbReference>
<dbReference type="PANTHER" id="PTHR43808:SF31">
    <property type="entry name" value="N-ACETYL-L-CITRULLINE DEACETYLASE"/>
    <property type="match status" value="1"/>
</dbReference>
<dbReference type="Pfam" id="PF07687">
    <property type="entry name" value="M20_dimer"/>
    <property type="match status" value="1"/>
</dbReference>
<dbReference type="Pfam" id="PF01546">
    <property type="entry name" value="Peptidase_M20"/>
    <property type="match status" value="1"/>
</dbReference>
<dbReference type="SUPFAM" id="SSF55031">
    <property type="entry name" value="Bacterial exopeptidase dimerisation domain"/>
    <property type="match status" value="1"/>
</dbReference>
<dbReference type="SUPFAM" id="SSF53187">
    <property type="entry name" value="Zn-dependent exopeptidases"/>
    <property type="match status" value="1"/>
</dbReference>
<dbReference type="PROSITE" id="PS00758">
    <property type="entry name" value="ARGE_DAPE_CPG2_1"/>
    <property type="match status" value="1"/>
</dbReference>
<name>DAPE_MYCTO</name>
<evidence type="ECO:0000250" key="1"/>
<evidence type="ECO:0000305" key="2"/>
<comment type="function">
    <text evidence="1">Catalyzes the hydrolysis of N-succinyl-L,L-diaminopimelic acid (SDAP), forming succinate and LL-2,6-diaminoheptanedioate (DAP), an intermediate involved in the bacterial biosynthesis of lysine and meso-diaminopimelic acid.</text>
</comment>
<comment type="catalytic activity">
    <reaction>
        <text>N-succinyl-(2S,6S)-2,6-diaminopimelate + H2O = (2S,6S)-2,6-diaminopimelate + succinate</text>
        <dbReference type="Rhea" id="RHEA:22608"/>
        <dbReference type="ChEBI" id="CHEBI:15377"/>
        <dbReference type="ChEBI" id="CHEBI:30031"/>
        <dbReference type="ChEBI" id="CHEBI:57609"/>
        <dbReference type="ChEBI" id="CHEBI:58087"/>
        <dbReference type="EC" id="3.5.1.18"/>
    </reaction>
</comment>
<comment type="cofactor">
    <cofactor evidence="1">
        <name>Zn(2+)</name>
        <dbReference type="ChEBI" id="CHEBI:29105"/>
    </cofactor>
    <cofactor evidence="1">
        <name>Co(2+)</name>
        <dbReference type="ChEBI" id="CHEBI:48828"/>
    </cofactor>
    <text evidence="1">Binds 2 Zn(2+) or Co(2+) ions per subunit.</text>
</comment>
<comment type="pathway">
    <text>Amino-acid biosynthesis; L-lysine biosynthesis via DAP pathway; LL-2,6-diaminopimelate from (S)-tetrahydrodipicolinate (succinylase route): step 3/3.</text>
</comment>
<comment type="subunit">
    <text evidence="1">Homodimer.</text>
</comment>
<comment type="similarity">
    <text evidence="2">Belongs to the peptidase M20A family.</text>
</comment>
<sequence length="354" mass="37273">MLDLRGDPIELTAALIDIPSESRKEARIADEVEAALRAQASGFEIIRNGNAVLARTKLNRSSRVLLAGHLDTVPVAGNLPSRRENDQLHGCGAADMKSGDAVFLHLAATLAEPTHDLTLVFYDCEEIDSAANGLGRIQRELPDWLSADVAILGEPTAGCIEAGCQGTLRVVLSVTGTRAHSARSWLGDNAIHKLGAVLDRLAVYRARSVDIDGCTYREGLSAVRVAGGVAGNVIPDAASVTINYRFAPDRSVAAALQHVHDVFDGLDVQIEQTDAAAGALPGLSEPAAKALVEAAGGQVRAKYGWTDVSRFAALGIPAVNYGPGDPNLAHCRDERVPVGNITAAVDLLRRYLGG</sequence>
<proteinExistence type="inferred from homology"/>
<reference key="1">
    <citation type="journal article" date="2002" name="J. Bacteriol.">
        <title>Whole-genome comparison of Mycobacterium tuberculosis clinical and laboratory strains.</title>
        <authorList>
            <person name="Fleischmann R.D."/>
            <person name="Alland D."/>
            <person name="Eisen J.A."/>
            <person name="Carpenter L."/>
            <person name="White O."/>
            <person name="Peterson J.D."/>
            <person name="DeBoy R.T."/>
            <person name="Dodson R.J."/>
            <person name="Gwinn M.L."/>
            <person name="Haft D.H."/>
            <person name="Hickey E.K."/>
            <person name="Kolonay J.F."/>
            <person name="Nelson W.C."/>
            <person name="Umayam L.A."/>
            <person name="Ermolaeva M.D."/>
            <person name="Salzberg S.L."/>
            <person name="Delcher A."/>
            <person name="Utterback T.R."/>
            <person name="Weidman J.F."/>
            <person name="Khouri H.M."/>
            <person name="Gill J."/>
            <person name="Mikula A."/>
            <person name="Bishai W."/>
            <person name="Jacobs W.R. Jr."/>
            <person name="Venter J.C."/>
            <person name="Fraser C.M."/>
        </authorList>
    </citation>
    <scope>NUCLEOTIDE SEQUENCE [LARGE SCALE GENOMIC DNA]</scope>
    <source>
        <strain>CDC 1551 / Oshkosh</strain>
    </source>
</reference>
<protein>
    <recommendedName>
        <fullName>Putative succinyl-diaminopimelate desuccinylase DapE</fullName>
        <shortName>SDAP desuccinylase</shortName>
        <ecNumber>3.5.1.18</ecNumber>
    </recommendedName>
</protein>
<feature type="chain" id="PRO_0000428130" description="Putative succinyl-diaminopimelate desuccinylase DapE">
    <location>
        <begin position="1"/>
        <end position="354"/>
    </location>
</feature>
<feature type="active site" evidence="1">
    <location>
        <position position="71"/>
    </location>
</feature>
<feature type="active site" description="Proton acceptor" evidence="1">
    <location>
        <position position="125"/>
    </location>
</feature>
<feature type="binding site" evidence="1">
    <location>
        <position position="69"/>
    </location>
    <ligand>
        <name>Zn(2+)</name>
        <dbReference type="ChEBI" id="CHEBI:29105"/>
        <label>1</label>
    </ligand>
</feature>
<feature type="binding site" evidence="1">
    <location>
        <position position="95"/>
    </location>
    <ligand>
        <name>Zn(2+)</name>
        <dbReference type="ChEBI" id="CHEBI:29105"/>
        <label>1</label>
    </ligand>
</feature>
<feature type="binding site" evidence="1">
    <location>
        <position position="95"/>
    </location>
    <ligand>
        <name>Zn(2+)</name>
        <dbReference type="ChEBI" id="CHEBI:29105"/>
        <label>2</label>
    </ligand>
</feature>
<feature type="binding site" evidence="1">
    <location>
        <position position="126"/>
    </location>
    <ligand>
        <name>Zn(2+)</name>
        <dbReference type="ChEBI" id="CHEBI:29105"/>
        <label>2</label>
    </ligand>
</feature>
<feature type="binding site" evidence="1">
    <location>
        <position position="154"/>
    </location>
    <ligand>
        <name>Zn(2+)</name>
        <dbReference type="ChEBI" id="CHEBI:29105"/>
        <label>1</label>
    </ligand>
</feature>
<feature type="binding site" evidence="1">
    <location>
        <position position="330"/>
    </location>
    <ligand>
        <name>Zn(2+)</name>
        <dbReference type="ChEBI" id="CHEBI:29105"/>
        <label>2</label>
    </ligand>
</feature>
<accession>P9WHS8</accession>
<accession>L0T8Y4</accession>
<accession>Q79FR1</accession>
<accession>Q7D8M5</accession>
<gene>
    <name type="primary">dapE</name>
    <name type="ordered locus">MT1240</name>
</gene>
<keyword id="KW-0028">Amino-acid biosynthesis</keyword>
<keyword id="KW-0170">Cobalt</keyword>
<keyword id="KW-0220">Diaminopimelate biosynthesis</keyword>
<keyword id="KW-0378">Hydrolase</keyword>
<keyword id="KW-0457">Lysine biosynthesis</keyword>
<keyword id="KW-0479">Metal-binding</keyword>
<keyword id="KW-1185">Reference proteome</keyword>
<keyword id="KW-0862">Zinc</keyword>